<keyword id="KW-0002">3D-structure</keyword>
<keyword id="KW-0963">Cytoplasm</keyword>
<keyword id="KW-0324">Glycolysis</keyword>
<keyword id="KW-0520">NAD</keyword>
<keyword id="KW-0560">Oxidoreductase</keyword>
<keyword id="KW-0597">Phosphoprotein</keyword>
<keyword id="KW-1185">Reference proteome</keyword>
<accession>Q9ESV6</accession>
<proteinExistence type="evidence at protein level"/>
<feature type="chain" id="PRO_0000380245" description="Glyceraldehyde-3-phosphate dehydrogenase, testis-specific">
    <location>
        <begin position="1"/>
        <end position="432"/>
    </location>
</feature>
<feature type="region of interest" description="Testis-specific N-terminal extension" evidence="1">
    <location>
        <begin position="1"/>
        <end position="97"/>
    </location>
</feature>
<feature type="region of interest" description="Disordered" evidence="3">
    <location>
        <begin position="40"/>
        <end position="101"/>
    </location>
</feature>
<feature type="compositionally biased region" description="Basic and acidic residues" evidence="3">
    <location>
        <begin position="44"/>
        <end position="55"/>
    </location>
</feature>
<feature type="compositionally biased region" description="Pro residues" evidence="3">
    <location>
        <begin position="56"/>
        <end position="67"/>
    </location>
</feature>
<feature type="compositionally biased region" description="Pro residues" evidence="3">
    <location>
        <begin position="75"/>
        <end position="95"/>
    </location>
</feature>
<feature type="active site" description="Nucleophile" evidence="2">
    <location>
        <position position="248"/>
    </location>
</feature>
<feature type="binding site" evidence="1">
    <location>
        <begin position="109"/>
        <end position="110"/>
    </location>
    <ligand>
        <name>NAD(+)</name>
        <dbReference type="ChEBI" id="CHEBI:57540"/>
    </ligand>
</feature>
<feature type="binding site" evidence="1">
    <location>
        <position position="130"/>
    </location>
    <ligand>
        <name>NAD(+)</name>
        <dbReference type="ChEBI" id="CHEBI:57540"/>
    </ligand>
</feature>
<feature type="binding site" evidence="1">
    <location>
        <position position="175"/>
    </location>
    <ligand>
        <name>NAD(+)</name>
        <dbReference type="ChEBI" id="CHEBI:57540"/>
    </ligand>
</feature>
<feature type="binding site" evidence="1">
    <location>
        <position position="197"/>
    </location>
    <ligand>
        <name>NAD(+)</name>
        <dbReference type="ChEBI" id="CHEBI:57540"/>
    </ligand>
</feature>
<feature type="binding site" evidence="1">
    <location>
        <position position="217"/>
    </location>
    <ligand>
        <name>NAD(+)</name>
        <dbReference type="ChEBI" id="CHEBI:57540"/>
    </ligand>
</feature>
<feature type="binding site" evidence="1">
    <location>
        <begin position="247"/>
        <end position="249"/>
    </location>
    <ligand>
        <name>D-glyceraldehyde 3-phosphate</name>
        <dbReference type="ChEBI" id="CHEBI:59776"/>
    </ligand>
</feature>
<feature type="binding site" evidence="1">
    <location>
        <position position="278"/>
    </location>
    <ligand>
        <name>D-glyceraldehyde 3-phosphate</name>
        <dbReference type="ChEBI" id="CHEBI:59776"/>
    </ligand>
</feature>
<feature type="binding site" evidence="1">
    <location>
        <begin position="307"/>
        <end position="308"/>
    </location>
    <ligand>
        <name>D-glyceraldehyde 3-phosphate</name>
        <dbReference type="ChEBI" id="CHEBI:59776"/>
    </ligand>
</feature>
<feature type="binding site" evidence="1">
    <location>
        <position position="330"/>
    </location>
    <ligand>
        <name>D-glyceraldehyde 3-phosphate</name>
        <dbReference type="ChEBI" id="CHEBI:59776"/>
    </ligand>
</feature>
<feature type="binding site" evidence="1">
    <location>
        <position position="412"/>
    </location>
    <ligand>
        <name>NAD(+)</name>
        <dbReference type="ChEBI" id="CHEBI:57540"/>
    </ligand>
</feature>
<feature type="site" description="Activates thiol group during catalysis" evidence="1">
    <location>
        <position position="275"/>
    </location>
</feature>
<feature type="modified residue" description="Phosphoserine" evidence="6">
    <location>
        <position position="350"/>
    </location>
</feature>
<feature type="strand" evidence="7">
    <location>
        <begin position="101"/>
        <end position="105"/>
    </location>
</feature>
<feature type="helix" evidence="7">
    <location>
        <begin position="109"/>
        <end position="121"/>
    </location>
</feature>
<feature type="strand" evidence="7">
    <location>
        <begin position="124"/>
        <end position="129"/>
    </location>
</feature>
<feature type="helix" evidence="7">
    <location>
        <begin position="135"/>
        <end position="143"/>
    </location>
</feature>
<feature type="turn" evidence="7">
    <location>
        <begin position="146"/>
        <end position="148"/>
    </location>
</feature>
<feature type="strand" evidence="7">
    <location>
        <begin position="155"/>
        <end position="158"/>
    </location>
</feature>
<feature type="strand" evidence="7">
    <location>
        <begin position="161"/>
        <end position="164"/>
    </location>
</feature>
<feature type="strand" evidence="7">
    <location>
        <begin position="167"/>
        <end position="172"/>
    </location>
</feature>
<feature type="helix" evidence="7">
    <location>
        <begin position="177"/>
        <end position="179"/>
    </location>
</feature>
<feature type="helix" evidence="7">
    <location>
        <begin position="182"/>
        <end position="185"/>
    </location>
</feature>
<feature type="strand" evidence="7">
    <location>
        <begin position="189"/>
        <end position="192"/>
    </location>
</feature>
<feature type="strand" evidence="7">
    <location>
        <begin position="194"/>
        <end position="196"/>
    </location>
</feature>
<feature type="helix" evidence="7">
    <location>
        <begin position="200"/>
        <end position="203"/>
    </location>
</feature>
<feature type="helix" evidence="7">
    <location>
        <begin position="205"/>
        <end position="208"/>
    </location>
</feature>
<feature type="strand" evidence="7">
    <location>
        <begin position="214"/>
        <end position="218"/>
    </location>
</feature>
<feature type="strand" evidence="7">
    <location>
        <begin position="221"/>
        <end position="223"/>
    </location>
</feature>
<feature type="turn" evidence="7">
    <location>
        <begin position="228"/>
        <end position="230"/>
    </location>
</feature>
<feature type="helix" evidence="7">
    <location>
        <begin position="232"/>
        <end position="234"/>
    </location>
</feature>
<feature type="turn" evidence="7">
    <location>
        <begin position="237"/>
        <end position="239"/>
    </location>
</feature>
<feature type="strand" evidence="7">
    <location>
        <begin position="241"/>
        <end position="244"/>
    </location>
</feature>
<feature type="helix" evidence="7">
    <location>
        <begin position="248"/>
        <end position="264"/>
    </location>
</feature>
<feature type="strand" evidence="7">
    <location>
        <begin position="266"/>
        <end position="276"/>
    </location>
</feature>
<feature type="strand" evidence="7">
    <location>
        <begin position="281"/>
        <end position="285"/>
    </location>
</feature>
<feature type="helix" evidence="7">
    <location>
        <begin position="293"/>
        <end position="295"/>
    </location>
</feature>
<feature type="turn" evidence="7">
    <location>
        <begin position="298"/>
        <end position="300"/>
    </location>
</feature>
<feature type="strand" evidence="7">
    <location>
        <begin position="303"/>
        <end position="305"/>
    </location>
</feature>
<feature type="helix" evidence="7">
    <location>
        <begin position="309"/>
        <end position="316"/>
    </location>
</feature>
<feature type="helix" evidence="7">
    <location>
        <begin position="318"/>
        <end position="320"/>
    </location>
</feature>
<feature type="strand" evidence="7">
    <location>
        <begin position="323"/>
        <end position="332"/>
    </location>
</feature>
<feature type="strand" evidence="7">
    <location>
        <begin position="337"/>
        <end position="347"/>
    </location>
</feature>
<feature type="helix" evidence="7">
    <location>
        <begin position="351"/>
        <end position="363"/>
    </location>
</feature>
<feature type="turn" evidence="7">
    <location>
        <begin position="364"/>
        <end position="369"/>
    </location>
</feature>
<feature type="strand" evidence="7">
    <location>
        <begin position="370"/>
        <end position="373"/>
    </location>
</feature>
<feature type="helix" evidence="7">
    <location>
        <begin position="379"/>
        <end position="382"/>
    </location>
</feature>
<feature type="strand" evidence="7">
    <location>
        <begin position="388"/>
        <end position="392"/>
    </location>
</feature>
<feature type="turn" evidence="7">
    <location>
        <begin position="393"/>
        <end position="395"/>
    </location>
</feature>
<feature type="strand" evidence="7">
    <location>
        <begin position="397"/>
        <end position="400"/>
    </location>
</feature>
<feature type="strand" evidence="7">
    <location>
        <begin position="403"/>
        <end position="410"/>
    </location>
</feature>
<feature type="helix" evidence="7">
    <location>
        <begin position="414"/>
        <end position="429"/>
    </location>
</feature>
<gene>
    <name type="primary">Gapdhs</name>
    <name type="synonym">Gapd-s</name>
    <name type="synonym">Gapds</name>
</gene>
<name>G3PT_RAT</name>
<protein>
    <recommendedName>
        <fullName>Glyceraldehyde-3-phosphate dehydrogenase, testis-specific</fullName>
        <ecNumber>1.2.1.12</ecNumber>
    </recommendedName>
    <alternativeName>
        <fullName>Spermatogenic cell-specific glyceraldehyde 3-phosphate dehydrogenase 2</fullName>
        <shortName>GAPDH-2</shortName>
    </alternativeName>
    <alternativeName>
        <fullName>Spermatogenic glyceraldehyde-3-phosphate dehydrogenase</fullName>
    </alternativeName>
</protein>
<sequence length="432" mass="46708">MSRRDVVLTNVTVVQLRRDPCPCPCPCPCPCPCPVIRPPPPPPKVEEPPPPKEEPPPPPPPPPPPQIEPEEPKEAPPPPPPPPPPPPPPPPPPPKPAKELTVGINGFGRIGRLVLRVCMEKGVRVVAVNDPFIDPEYMVYMFKYDSTHGRYKGTVEHKNGRLVVDNLEINVFQCKEPKEIPWSSVGNPYVVEATGVYLSIEAASGHISSGARRVIVTAPSPDAPMLVMGVNEKDYNPGSMTVVSNASCTTNCLAPLAKVIHERFGIVEGLMTTVHAYTATQKTVDGPSKKDWRGGRGAHQNIIPSSTGAAKAVGKVIPELNGKLTGMAFRVPTPNVSVVDLTCRLAQPASYTAIKEAVKAAAKGPMAGILAYTEDQVVSTDFNGDSHSSIFDAKAGIALNDNFVKLVSWYDNEYGYSHRVVDLLRYMFSREK</sequence>
<comment type="function">
    <text evidence="1">May play an important role in regulating the switch between different pathways for energy production during spermiogenesis and in the spermatozoon. Required for sperm motility and male fertility (By similarity).</text>
</comment>
<comment type="catalytic activity">
    <reaction evidence="2">
        <text>D-glyceraldehyde 3-phosphate + phosphate + NAD(+) = (2R)-3-phospho-glyceroyl phosphate + NADH + H(+)</text>
        <dbReference type="Rhea" id="RHEA:10300"/>
        <dbReference type="ChEBI" id="CHEBI:15378"/>
        <dbReference type="ChEBI" id="CHEBI:43474"/>
        <dbReference type="ChEBI" id="CHEBI:57540"/>
        <dbReference type="ChEBI" id="CHEBI:57604"/>
        <dbReference type="ChEBI" id="CHEBI:57945"/>
        <dbReference type="ChEBI" id="CHEBI:59776"/>
        <dbReference type="EC" id="1.2.1.12"/>
    </reaction>
</comment>
<comment type="pathway">
    <text>Carbohydrate degradation; glycolysis; pyruvate from D-glyceraldehyde 3-phosphate: step 1/5.</text>
</comment>
<comment type="subunit">
    <text evidence="1">Homotetramer.</text>
</comment>
<comment type="subcellular location">
    <subcellularLocation>
        <location evidence="1">Cytoplasm</location>
    </subcellularLocation>
</comment>
<comment type="tissue specificity">
    <text evidence="4">Expressed in both head and flagellum of epididymal sperm.</text>
</comment>
<comment type="domain">
    <text evidence="1">The testis-specific N-terminal extension mediates tight association with the cytoskeletal fibrous sheath of the spermatozoa flagellum, possibly via interchain disulfide-bonding of Cys-33 with sheath components.</text>
</comment>
<comment type="similarity">
    <text evidence="5">Belongs to the glyceraldehyde-3-phosphate dehydrogenase family.</text>
</comment>
<dbReference type="EC" id="1.2.1.12"/>
<dbReference type="EMBL" id="AJ297631">
    <property type="protein sequence ID" value="CAC05399.1"/>
    <property type="molecule type" value="mRNA"/>
</dbReference>
<dbReference type="RefSeq" id="NP_076454.1">
    <property type="nucleotide sequence ID" value="NM_023964.1"/>
</dbReference>
<dbReference type="PDB" id="2VYN">
    <property type="method" value="X-ray"/>
    <property type="resolution" value="2.20 A"/>
    <property type="chains" value="D=102-432"/>
</dbReference>
<dbReference type="PDB" id="2VYV">
    <property type="method" value="X-ray"/>
    <property type="resolution" value="2.38 A"/>
    <property type="chains" value="D=102-432"/>
</dbReference>
<dbReference type="PDBsum" id="2VYN"/>
<dbReference type="PDBsum" id="2VYV"/>
<dbReference type="SMR" id="Q9ESV6"/>
<dbReference type="FunCoup" id="Q9ESV6">
    <property type="interactions" value="93"/>
</dbReference>
<dbReference type="STRING" id="10116.ENSRNOP00000059802"/>
<dbReference type="iPTMnet" id="Q9ESV6"/>
<dbReference type="PhosphoSitePlus" id="Q9ESV6"/>
<dbReference type="SwissPalm" id="Q9ESV6"/>
<dbReference type="jPOST" id="Q9ESV6"/>
<dbReference type="PaxDb" id="10116-ENSRNOP00000059802"/>
<dbReference type="Ensembl" id="ENSRNOT00000028518.7">
    <property type="protein sequence ID" value="ENSRNOP00000028518.4"/>
    <property type="gene ID" value="ENSRNOG00000021009.7"/>
</dbReference>
<dbReference type="GeneID" id="66020"/>
<dbReference type="KEGG" id="rno:66020"/>
<dbReference type="UCSC" id="RGD:620150">
    <property type="organism name" value="rat"/>
</dbReference>
<dbReference type="AGR" id="RGD:620150"/>
<dbReference type="CTD" id="26330"/>
<dbReference type="RGD" id="620150">
    <property type="gene designation" value="Gapdhs"/>
</dbReference>
<dbReference type="eggNOG" id="KOG0657">
    <property type="taxonomic scope" value="Eukaryota"/>
</dbReference>
<dbReference type="GeneTree" id="ENSGT00940000160272"/>
<dbReference type="HOGENOM" id="CLU_030140_0_1_1"/>
<dbReference type="InParanoid" id="Q9ESV6"/>
<dbReference type="PhylomeDB" id="Q9ESV6"/>
<dbReference type="TreeFam" id="TF300533"/>
<dbReference type="BRENDA" id="1.2.1.12">
    <property type="organism ID" value="5301"/>
</dbReference>
<dbReference type="Reactome" id="R-RNO-70171">
    <property type="pathway name" value="Glycolysis"/>
</dbReference>
<dbReference type="Reactome" id="R-RNO-70263">
    <property type="pathway name" value="Gluconeogenesis"/>
</dbReference>
<dbReference type="UniPathway" id="UPA00109">
    <property type="reaction ID" value="UER00184"/>
</dbReference>
<dbReference type="EvolutionaryTrace" id="Q9ESV6"/>
<dbReference type="PRO" id="PR:Q9ESV6"/>
<dbReference type="Proteomes" id="UP000002494">
    <property type="component" value="Chromosome 1"/>
</dbReference>
<dbReference type="Bgee" id="ENSRNOG00000021009">
    <property type="expression patterns" value="Expressed in testis and 17 other cell types or tissues"/>
</dbReference>
<dbReference type="ExpressionAtlas" id="Q9ESV6">
    <property type="expression patterns" value="baseline and differential"/>
</dbReference>
<dbReference type="GO" id="GO:0001669">
    <property type="term" value="C:acrosomal vesicle"/>
    <property type="evidence" value="ECO:0000304"/>
    <property type="project" value="RGD"/>
</dbReference>
<dbReference type="GO" id="GO:0005929">
    <property type="term" value="C:cilium"/>
    <property type="evidence" value="ECO:0000266"/>
    <property type="project" value="RGD"/>
</dbReference>
<dbReference type="GO" id="GO:0005829">
    <property type="term" value="C:cytosol"/>
    <property type="evidence" value="ECO:0000318"/>
    <property type="project" value="GO_Central"/>
</dbReference>
<dbReference type="GO" id="GO:0031514">
    <property type="term" value="C:motile cilium"/>
    <property type="evidence" value="ECO:0000314"/>
    <property type="project" value="RGD"/>
</dbReference>
<dbReference type="GO" id="GO:0035686">
    <property type="term" value="C:sperm fibrous sheath"/>
    <property type="evidence" value="ECO:0000266"/>
    <property type="project" value="RGD"/>
</dbReference>
<dbReference type="GO" id="GO:0097228">
    <property type="term" value="C:sperm principal piece"/>
    <property type="evidence" value="ECO:0000266"/>
    <property type="project" value="RGD"/>
</dbReference>
<dbReference type="GO" id="GO:0004365">
    <property type="term" value="F:glyceraldehyde-3-phosphate dehydrogenase (NAD+) (phosphorylating) activity"/>
    <property type="evidence" value="ECO:0000266"/>
    <property type="project" value="RGD"/>
</dbReference>
<dbReference type="GO" id="GO:0051287">
    <property type="term" value="F:NAD binding"/>
    <property type="evidence" value="ECO:0007669"/>
    <property type="project" value="InterPro"/>
</dbReference>
<dbReference type="GO" id="GO:0050661">
    <property type="term" value="F:NADP binding"/>
    <property type="evidence" value="ECO:0007669"/>
    <property type="project" value="InterPro"/>
</dbReference>
<dbReference type="GO" id="GO:0030317">
    <property type="term" value="P:flagellated sperm motility"/>
    <property type="evidence" value="ECO:0000266"/>
    <property type="project" value="RGD"/>
</dbReference>
<dbReference type="GO" id="GO:0006006">
    <property type="term" value="P:glucose metabolic process"/>
    <property type="evidence" value="ECO:0007669"/>
    <property type="project" value="InterPro"/>
</dbReference>
<dbReference type="GO" id="GO:0006096">
    <property type="term" value="P:glycolytic process"/>
    <property type="evidence" value="ECO:0000266"/>
    <property type="project" value="RGD"/>
</dbReference>
<dbReference type="GO" id="GO:0007286">
    <property type="term" value="P:spermatid development"/>
    <property type="evidence" value="ECO:0000270"/>
    <property type="project" value="RGD"/>
</dbReference>
<dbReference type="CDD" id="cd18126">
    <property type="entry name" value="GAPDH_I_C"/>
    <property type="match status" value="1"/>
</dbReference>
<dbReference type="CDD" id="cd05214">
    <property type="entry name" value="GAPDH_I_N"/>
    <property type="match status" value="1"/>
</dbReference>
<dbReference type="FunFam" id="3.30.360.10:FF:000001">
    <property type="entry name" value="Glyceraldehyde-3-phosphate dehydrogenase"/>
    <property type="match status" value="1"/>
</dbReference>
<dbReference type="FunFam" id="3.40.50.720:FF:000020">
    <property type="entry name" value="Glyceraldehyde-3-phosphate dehydrogenase"/>
    <property type="match status" value="1"/>
</dbReference>
<dbReference type="Gene3D" id="3.30.360.10">
    <property type="entry name" value="Dihydrodipicolinate Reductase, domain 2"/>
    <property type="match status" value="1"/>
</dbReference>
<dbReference type="Gene3D" id="3.40.50.720">
    <property type="entry name" value="NAD(P)-binding Rossmann-like Domain"/>
    <property type="match status" value="1"/>
</dbReference>
<dbReference type="InterPro" id="IPR020831">
    <property type="entry name" value="GlycerAld/Erythrose_P_DH"/>
</dbReference>
<dbReference type="InterPro" id="IPR020830">
    <property type="entry name" value="GlycerAld_3-P_DH_AS"/>
</dbReference>
<dbReference type="InterPro" id="IPR020829">
    <property type="entry name" value="GlycerAld_3-P_DH_cat"/>
</dbReference>
<dbReference type="InterPro" id="IPR020828">
    <property type="entry name" value="GlycerAld_3-P_DH_NAD(P)-bd"/>
</dbReference>
<dbReference type="InterPro" id="IPR006424">
    <property type="entry name" value="Glyceraldehyde-3-P_DH_1"/>
</dbReference>
<dbReference type="InterPro" id="IPR036291">
    <property type="entry name" value="NAD(P)-bd_dom_sf"/>
</dbReference>
<dbReference type="NCBIfam" id="TIGR01534">
    <property type="entry name" value="GAPDH-I"/>
    <property type="match status" value="1"/>
</dbReference>
<dbReference type="PANTHER" id="PTHR10836">
    <property type="entry name" value="GLYCERALDEHYDE 3-PHOSPHATE DEHYDROGENASE"/>
    <property type="match status" value="1"/>
</dbReference>
<dbReference type="PANTHER" id="PTHR10836:SF79">
    <property type="entry name" value="GLYCERALDEHYDE-3-PHOSPHATE DEHYDROGENASE, TESTIS-SPECIFIC"/>
    <property type="match status" value="1"/>
</dbReference>
<dbReference type="Pfam" id="PF02800">
    <property type="entry name" value="Gp_dh_C"/>
    <property type="match status" value="1"/>
</dbReference>
<dbReference type="Pfam" id="PF00044">
    <property type="entry name" value="Gp_dh_N"/>
    <property type="match status" value="1"/>
</dbReference>
<dbReference type="PRINTS" id="PR00078">
    <property type="entry name" value="G3PDHDRGNASE"/>
</dbReference>
<dbReference type="SMART" id="SM00846">
    <property type="entry name" value="Gp_dh_N"/>
    <property type="match status" value="1"/>
</dbReference>
<dbReference type="SUPFAM" id="SSF101447">
    <property type="entry name" value="Formin homology 2 domain (FH2 domain)"/>
    <property type="match status" value="1"/>
</dbReference>
<dbReference type="SUPFAM" id="SSF55347">
    <property type="entry name" value="Glyceraldehyde-3-phosphate dehydrogenase-like, C-terminal domain"/>
    <property type="match status" value="1"/>
</dbReference>
<dbReference type="SUPFAM" id="SSF51735">
    <property type="entry name" value="NAD(P)-binding Rossmann-fold domains"/>
    <property type="match status" value="1"/>
</dbReference>
<dbReference type="PROSITE" id="PS00071">
    <property type="entry name" value="GAPDH"/>
    <property type="match status" value="1"/>
</dbReference>
<organism>
    <name type="scientific">Rattus norvegicus</name>
    <name type="common">Rat</name>
    <dbReference type="NCBI Taxonomy" id="10116"/>
    <lineage>
        <taxon>Eukaryota</taxon>
        <taxon>Metazoa</taxon>
        <taxon>Chordata</taxon>
        <taxon>Craniata</taxon>
        <taxon>Vertebrata</taxon>
        <taxon>Euteleostomi</taxon>
        <taxon>Mammalia</taxon>
        <taxon>Eutheria</taxon>
        <taxon>Euarchontoglires</taxon>
        <taxon>Glires</taxon>
        <taxon>Rodentia</taxon>
        <taxon>Myomorpha</taxon>
        <taxon>Muroidea</taxon>
        <taxon>Muridae</taxon>
        <taxon>Murinae</taxon>
        <taxon>Rattus</taxon>
    </lineage>
</organism>
<evidence type="ECO:0000250" key="1"/>
<evidence type="ECO:0000255" key="2">
    <source>
        <dbReference type="PROSITE-ProRule" id="PRU10009"/>
    </source>
</evidence>
<evidence type="ECO:0000256" key="3">
    <source>
        <dbReference type="SAM" id="MobiDB-lite"/>
    </source>
</evidence>
<evidence type="ECO:0000269" key="4">
    <source>
    </source>
</evidence>
<evidence type="ECO:0000305" key="5"/>
<evidence type="ECO:0007744" key="6">
    <source>
    </source>
</evidence>
<evidence type="ECO:0007829" key="7">
    <source>
        <dbReference type="PDB" id="2VYN"/>
    </source>
</evidence>
<reference key="1">
    <citation type="submission" date="2000-08" db="EMBL/GenBank/DDBJ databases">
        <title>Nucleotide sequence of rat testis-specific glyceraldehyde-3-phosphate dehydrogenase (GAPDH-2) cDNA.</title>
        <authorList>
            <person name="McLaughlin E.A."/>
            <person name="Hall L."/>
        </authorList>
    </citation>
    <scope>NUCLEOTIDE SEQUENCE [MRNA]</scope>
    <source>
        <strain>Wistar</strain>
        <tissue>Testis</tissue>
    </source>
</reference>
<reference key="2">
    <citation type="journal article" date="2009" name="Reproduction">
        <title>Identification of novel immunodominant epididymal sperm proteins using combinatorial approach.</title>
        <authorList>
            <person name="Khan S.A."/>
            <person name="Suryawanshi A.R."/>
            <person name="Ranpura S.A."/>
            <person name="Jadhav S.V."/>
            <person name="Khole V.V."/>
        </authorList>
    </citation>
    <scope>IDENTIFICATION BY MASS SPECTROMETRY</scope>
    <scope>TISSUE SPECIFICITY</scope>
</reference>
<reference key="3">
    <citation type="journal article" date="2012" name="Nat. Commun.">
        <title>Quantitative maps of protein phosphorylation sites across 14 different rat organs and tissues.</title>
        <authorList>
            <person name="Lundby A."/>
            <person name="Secher A."/>
            <person name="Lage K."/>
            <person name="Nordsborg N.B."/>
            <person name="Dmytriyev A."/>
            <person name="Lundby C."/>
            <person name="Olsen J.V."/>
        </authorList>
    </citation>
    <scope>PHOSPHORYLATION [LARGE SCALE ANALYSIS] AT SER-350</scope>
    <scope>IDENTIFICATION BY MASS SPECTROMETRY [LARGE SCALE ANALYSIS]</scope>
</reference>
<reference key="4">
    <citation type="journal article" date="2009" name="J. Biol. Chem.">
        <title>Structure of insoluble rat sperm glyceraldehyde-3-phosphate dehydrogenase (GAPDH) via heterotetramer formation with Escherichia coli GAPDH reveals target for contraceptive design.</title>
        <authorList>
            <person name="Frayne J."/>
            <person name="Taylor A."/>
            <person name="Cameron G."/>
            <person name="Hadfield A.T."/>
        </authorList>
    </citation>
    <scope>X-RAY CRYSTALLOGRAPHY (2.2 ANGSTROMS) OF 102-432 IN TETRAMER WITH E.COLI GAPDH</scope>
</reference>